<dbReference type="EMBL" id="AK296854">
    <property type="protein sequence ID" value="BAH12443.1"/>
    <property type="molecule type" value="mRNA"/>
</dbReference>
<dbReference type="EMBL" id="AC006276">
    <property type="protein sequence ID" value="AAC99796.1"/>
    <property type="status" value="ALT_SEQ"/>
    <property type="molecule type" value="Genomic_DNA"/>
</dbReference>
<dbReference type="EMBL" id="L34079">
    <property type="status" value="NOT_ANNOTATED_CDS"/>
    <property type="molecule type" value="Genomic_DNA"/>
</dbReference>
<dbReference type="EMBL" id="BC071811">
    <property type="status" value="NOT_ANNOTATED_CDS"/>
    <property type="molecule type" value="mRNA"/>
</dbReference>
<dbReference type="CCDS" id="CCDS58667.1">
    <molecule id="A6NC86-4"/>
</dbReference>
<dbReference type="CCDS" id="CCDS74385.2">
    <molecule id="A6NC86-1"/>
</dbReference>
<dbReference type="RefSeq" id="NP_001180550.2">
    <molecule id="A6NC86-1"/>
    <property type="nucleotide sequence ID" value="NM_001193621.3"/>
</dbReference>
<dbReference type="RefSeq" id="NP_001180551.1">
    <molecule id="A6NC86-4"/>
    <property type="nucleotide sequence ID" value="NM_001193622.2"/>
</dbReference>
<dbReference type="RefSeq" id="NP_001308053.1">
    <molecule id="A6NC86-4"/>
    <property type="nucleotide sequence ID" value="NM_001321124.2"/>
</dbReference>
<dbReference type="RefSeq" id="XP_011525272.1">
    <property type="nucleotide sequence ID" value="XM_011526970.2"/>
</dbReference>
<dbReference type="RefSeq" id="XP_011525273.1">
    <molecule id="A6NC86-4"/>
    <property type="nucleotide sequence ID" value="XM_011526971.3"/>
</dbReference>
<dbReference type="RefSeq" id="XP_047294786.1">
    <molecule id="A6NC86-2"/>
    <property type="nucleotide sequence ID" value="XM_047438830.1"/>
</dbReference>
<dbReference type="RefSeq" id="XP_054176988.1">
    <molecule id="A6NC86-4"/>
    <property type="nucleotide sequence ID" value="XM_054321013.1"/>
</dbReference>
<dbReference type="SMR" id="A6NC86"/>
<dbReference type="FunCoup" id="A6NC86">
    <property type="interactions" value="1"/>
</dbReference>
<dbReference type="STRING" id="9606.ENSP00000479240"/>
<dbReference type="GlyCosmos" id="A6NC86">
    <property type="glycosylation" value="1 site, 1 glycan"/>
</dbReference>
<dbReference type="GlyGen" id="A6NC86">
    <property type="glycosylation" value="1 site, 1 O-linked glycan (1 site)"/>
</dbReference>
<dbReference type="iPTMnet" id="A6NC86"/>
<dbReference type="PhosphoSitePlus" id="A6NC86"/>
<dbReference type="BioMuta" id="PINLYP"/>
<dbReference type="MassIVE" id="A6NC86"/>
<dbReference type="PaxDb" id="9606-ENSP00000479240"/>
<dbReference type="PeptideAtlas" id="A6NC86"/>
<dbReference type="Antibodypedia" id="70850">
    <property type="antibodies" value="4 antibodies from 4 providers"/>
</dbReference>
<dbReference type="DNASU" id="390940"/>
<dbReference type="Ensembl" id="ENST00000562255.5">
    <molecule id="A6NC86-4"/>
    <property type="protein sequence ID" value="ENSP00000457623.1"/>
    <property type="gene ID" value="ENSG00000234465.11"/>
</dbReference>
<dbReference type="Ensembl" id="ENST00000562365.2">
    <molecule id="A6NC86-4"/>
    <property type="protein sequence ID" value="ENSP00000456310.1"/>
    <property type="gene ID" value="ENSG00000234465.11"/>
</dbReference>
<dbReference type="Ensembl" id="ENST00000569031.6">
    <molecule id="A6NC86-4"/>
    <property type="protein sequence ID" value="ENSP00000457369.1"/>
    <property type="gene ID" value="ENSG00000234465.11"/>
</dbReference>
<dbReference type="Ensembl" id="ENST00000599207.6">
    <molecule id="A6NC86-1"/>
    <property type="protein sequence ID" value="ENSP00000469886.1"/>
    <property type="gene ID" value="ENSG00000234465.11"/>
</dbReference>
<dbReference type="Ensembl" id="ENST00000612042.4">
    <molecule id="A6NC86-2"/>
    <property type="protein sequence ID" value="ENSP00000479240.1"/>
    <property type="gene ID" value="ENSG00000234465.11"/>
</dbReference>
<dbReference type="GeneID" id="390940"/>
<dbReference type="KEGG" id="hsa:390940"/>
<dbReference type="MANE-Select" id="ENST00000599207.6">
    <property type="protein sequence ID" value="ENSP00000469886.1"/>
    <property type="RefSeq nucleotide sequence ID" value="NM_001193621.3"/>
    <property type="RefSeq protein sequence ID" value="NP_001180550.2"/>
</dbReference>
<dbReference type="UCSC" id="uc002owu.3">
    <molecule id="A6NC86-1"/>
    <property type="organism name" value="human"/>
</dbReference>
<dbReference type="AGR" id="HGNC:44206"/>
<dbReference type="CTD" id="390940"/>
<dbReference type="DisGeNET" id="390940"/>
<dbReference type="GeneCards" id="PINLYP"/>
<dbReference type="HGNC" id="HGNC:44206">
    <property type="gene designation" value="PINLYP"/>
</dbReference>
<dbReference type="HPA" id="ENSG00000234465">
    <property type="expression patterns" value="Low tissue specificity"/>
</dbReference>
<dbReference type="neXtProt" id="NX_A6NC86"/>
<dbReference type="OpenTargets" id="ENSG00000234465"/>
<dbReference type="VEuPathDB" id="HostDB:ENSG00000234465"/>
<dbReference type="eggNOG" id="ENOG502SRI1">
    <property type="taxonomic scope" value="Eukaryota"/>
</dbReference>
<dbReference type="GeneTree" id="ENSGT00730000111229"/>
<dbReference type="HOGENOM" id="CLU_094248_0_0_1"/>
<dbReference type="InParanoid" id="A6NC86"/>
<dbReference type="OMA" id="ESACYAK"/>
<dbReference type="OrthoDB" id="9907178at2759"/>
<dbReference type="PAN-GO" id="A6NC86">
    <property type="GO annotations" value="0 GO annotations based on evolutionary models"/>
</dbReference>
<dbReference type="PhylomeDB" id="A6NC86"/>
<dbReference type="PathwayCommons" id="A6NC86"/>
<dbReference type="BioGRID-ORCS" id="390940">
    <property type="hits" value="18 hits in 1141 CRISPR screens"/>
</dbReference>
<dbReference type="ChiTaRS" id="PINLYP">
    <property type="organism name" value="human"/>
</dbReference>
<dbReference type="GenomeRNAi" id="390940"/>
<dbReference type="Pharos" id="A6NC86">
    <property type="development level" value="Tdark"/>
</dbReference>
<dbReference type="PRO" id="PR:A6NC86"/>
<dbReference type="Proteomes" id="UP000005640">
    <property type="component" value="Chromosome 19"/>
</dbReference>
<dbReference type="RNAct" id="A6NC86">
    <property type="molecule type" value="protein"/>
</dbReference>
<dbReference type="Bgee" id="ENSG00000234465">
    <property type="expression patterns" value="Expressed in ventricular zone and 131 other cell types or tissues"/>
</dbReference>
<dbReference type="GO" id="GO:0005576">
    <property type="term" value="C:extracellular region"/>
    <property type="evidence" value="ECO:0007669"/>
    <property type="project" value="UniProtKB-SubCell"/>
</dbReference>
<dbReference type="GO" id="GO:0004859">
    <property type="term" value="F:phospholipase inhibitor activity"/>
    <property type="evidence" value="ECO:0007669"/>
    <property type="project" value="InterPro"/>
</dbReference>
<dbReference type="CDD" id="cd23571">
    <property type="entry name" value="TFP_LU_ECD_PINLYP_rpt1"/>
    <property type="match status" value="1"/>
</dbReference>
<dbReference type="CDD" id="cd23572">
    <property type="entry name" value="TFP_LU_ECD_PINLYP_rpt2"/>
    <property type="match status" value="1"/>
</dbReference>
<dbReference type="Gene3D" id="2.10.60.10">
    <property type="entry name" value="CD59"/>
    <property type="match status" value="2"/>
</dbReference>
<dbReference type="InterPro" id="IPR050918">
    <property type="entry name" value="CNF-like_PLA2_Inhibitor"/>
</dbReference>
<dbReference type="InterPro" id="IPR016054">
    <property type="entry name" value="LY6_UPA_recep-like"/>
</dbReference>
<dbReference type="InterPro" id="IPR004126">
    <property type="entry name" value="PLipase_A2_inh_N"/>
</dbReference>
<dbReference type="InterPro" id="IPR045860">
    <property type="entry name" value="Snake_toxin-like_sf"/>
</dbReference>
<dbReference type="PANTHER" id="PTHR20914">
    <property type="entry name" value="LY6/PLAUR DOMAIN-CONTAINING PROTEIN 8"/>
    <property type="match status" value="1"/>
</dbReference>
<dbReference type="PANTHER" id="PTHR20914:SF25">
    <property type="entry name" value="PHOSPHOLIPASE A2 INHIBITOR AND LY6_PLAUR DOMAIN-CONTAINING PROTEIN"/>
    <property type="match status" value="1"/>
</dbReference>
<dbReference type="Pfam" id="PF02988">
    <property type="entry name" value="PLA2_inh"/>
    <property type="match status" value="1"/>
</dbReference>
<dbReference type="Pfam" id="PF00021">
    <property type="entry name" value="UPAR_LY6"/>
    <property type="match status" value="1"/>
</dbReference>
<dbReference type="SUPFAM" id="SSF57302">
    <property type="entry name" value="Snake toxin-like"/>
    <property type="match status" value="2"/>
</dbReference>
<accession>A6NC86</accession>
<accession>B7Z457</accession>
<accession>O95053</accession>
<protein>
    <recommendedName>
        <fullName>phospholipase A2 inhibitor and Ly6/PLAUR domain-containing protein</fullName>
    </recommendedName>
</protein>
<feature type="signal peptide" evidence="2">
    <location>
        <begin position="1"/>
        <end position="26"/>
    </location>
</feature>
<feature type="chain" id="PRO_0000332737" description="phospholipase A2 inhibitor and Ly6/PLAUR domain-containing protein">
    <location>
        <begin position="27"/>
        <end position="204"/>
    </location>
</feature>
<feature type="domain" description="UPAR/Ly6">
    <location>
        <begin position="27"/>
        <end position="117"/>
    </location>
</feature>
<feature type="disulfide bond" evidence="1">
    <location>
        <begin position="29"/>
        <end position="53"/>
    </location>
</feature>
<feature type="disulfide bond" evidence="1">
    <location>
        <begin position="32"/>
        <end position="39"/>
    </location>
</feature>
<feature type="disulfide bond" evidence="1">
    <location>
        <begin position="46"/>
        <end position="74"/>
    </location>
</feature>
<feature type="disulfide bond" evidence="1">
    <location>
        <begin position="80"/>
        <end position="101"/>
    </location>
</feature>
<feature type="disulfide bond" evidence="1">
    <location>
        <begin position="102"/>
        <end position="107"/>
    </location>
</feature>
<feature type="disulfide bond" evidence="1">
    <location>
        <begin position="126"/>
        <end position="151"/>
    </location>
</feature>
<feature type="disulfide bond" evidence="1">
    <location>
        <begin position="144"/>
        <end position="172"/>
    </location>
</feature>
<feature type="splice variant" id="VSP_044188" description="In isoform 4." evidence="4">
    <location>
        <begin position="1"/>
        <end position="88"/>
    </location>
</feature>
<feature type="splice variant" id="VSP_044189" description="In isoform 2 and isoform 3." evidence="3">
    <original>M</original>
    <variation>MWVQTHPSSASYKSWGPGTADTHTM</variation>
    <location>
        <position position="1"/>
    </location>
</feature>
<feature type="splice variant" id="VSP_044190" description="In isoform 3." evidence="3">
    <original>KGKELVHTYKGCIRSQDCYSGVISTTMGPKDHMVTSSFCCQSDGCNSAFLSVPLTNLTENGLMCPACTASFRDKCMGPMTHCTGKENHCVSLSGHVQAGIFKPRFAMRGCATESMCFTKPGAEVPTGTNVLFLHHIECTHSP</original>
    <variation>SKRMWPGTWWGGGVYLQGGRDYHAEGGSSRFSRRERGKKSVESRKEGKTIMRWREQK</variation>
    <location>
        <begin position="63"/>
        <end position="204"/>
    </location>
</feature>
<feature type="sequence conflict" description="In Ref. 1; BAH12443." evidence="5" ref="1">
    <original>H</original>
    <variation>R</variation>
    <location sequence="A6NC86-3">
        <position position="6"/>
    </location>
</feature>
<keyword id="KW-0025">Alternative splicing</keyword>
<keyword id="KW-1015">Disulfide bond</keyword>
<keyword id="KW-1267">Proteomics identification</keyword>
<keyword id="KW-1185">Reference proteome</keyword>
<keyword id="KW-0964">Secreted</keyword>
<keyword id="KW-0732">Signal</keyword>
<proteinExistence type="evidence at protein level"/>
<comment type="subcellular location">
    <subcellularLocation>
        <location evidence="5">Secreted</location>
    </subcellularLocation>
</comment>
<comment type="alternative products">
    <event type="alternative splicing"/>
    <isoform>
        <id>A6NC86-1</id>
        <name>1</name>
        <sequence type="displayed"/>
    </isoform>
    <isoform>
        <id>A6NC86-2</id>
        <name>2</name>
        <sequence type="described" ref="VSP_044189"/>
    </isoform>
    <isoform>
        <id>A6NC86-3</id>
        <name>3</name>
        <sequence type="described" ref="VSP_044189 VSP_044190"/>
    </isoform>
    <isoform>
        <id>A6NC86-4</id>
        <name>4</name>
        <sequence type="described" ref="VSP_044188"/>
    </isoform>
</comment>
<comment type="similarity">
    <text evidence="5">Belongs to the CNF-like-inhibitor family.</text>
</comment>
<comment type="sequence caution" evidence="5">
    <conflict type="erroneous gene model prediction">
        <sequence resource="EMBL-CDS" id="AAC99796"/>
    </conflict>
</comment>
<name>PINLY_HUMAN</name>
<organism>
    <name type="scientific">Homo sapiens</name>
    <name type="common">Human</name>
    <dbReference type="NCBI Taxonomy" id="9606"/>
    <lineage>
        <taxon>Eukaryota</taxon>
        <taxon>Metazoa</taxon>
        <taxon>Chordata</taxon>
        <taxon>Craniata</taxon>
        <taxon>Vertebrata</taxon>
        <taxon>Euteleostomi</taxon>
        <taxon>Mammalia</taxon>
        <taxon>Eutheria</taxon>
        <taxon>Euarchontoglires</taxon>
        <taxon>Primates</taxon>
        <taxon>Haplorrhini</taxon>
        <taxon>Catarrhini</taxon>
        <taxon>Hominidae</taxon>
        <taxon>Homo</taxon>
    </lineage>
</organism>
<gene>
    <name type="primary">PINLYP</name>
</gene>
<evidence type="ECO:0000250" key="1"/>
<evidence type="ECO:0000255" key="2"/>
<evidence type="ECO:0000303" key="3">
    <source>
    </source>
</evidence>
<evidence type="ECO:0000303" key="4">
    <source>
    </source>
</evidence>
<evidence type="ECO:0000305" key="5"/>
<sequence>MRLSRRPETFLLAFVLLCTLLGLGCPLHCEICTAAGSRCHGQMKTCSSDKDTCVLLVGKATSKGKELVHTYKGCIRSQDCYSGVISTTMGPKDHMVTSSFCCQSDGCNSAFLSVPLTNLTENGLMCPACTASFRDKCMGPMTHCTGKENHCVSLSGHVQAGIFKPRFAMRGCATESMCFTKPGAEVPTGTNVLFLHHIECTHSP</sequence>
<reference key="1">
    <citation type="journal article" date="2004" name="Nat. Genet.">
        <title>Complete sequencing and characterization of 21,243 full-length human cDNAs.</title>
        <authorList>
            <person name="Ota T."/>
            <person name="Suzuki Y."/>
            <person name="Nishikawa T."/>
            <person name="Otsuki T."/>
            <person name="Sugiyama T."/>
            <person name="Irie R."/>
            <person name="Wakamatsu A."/>
            <person name="Hayashi K."/>
            <person name="Sato H."/>
            <person name="Nagai K."/>
            <person name="Kimura K."/>
            <person name="Makita H."/>
            <person name="Sekine M."/>
            <person name="Obayashi M."/>
            <person name="Nishi T."/>
            <person name="Shibahara T."/>
            <person name="Tanaka T."/>
            <person name="Ishii S."/>
            <person name="Yamamoto J."/>
            <person name="Saito K."/>
            <person name="Kawai Y."/>
            <person name="Isono Y."/>
            <person name="Nakamura Y."/>
            <person name="Nagahari K."/>
            <person name="Murakami K."/>
            <person name="Yasuda T."/>
            <person name="Iwayanagi T."/>
            <person name="Wagatsuma M."/>
            <person name="Shiratori A."/>
            <person name="Sudo H."/>
            <person name="Hosoiri T."/>
            <person name="Kaku Y."/>
            <person name="Kodaira H."/>
            <person name="Kondo H."/>
            <person name="Sugawara M."/>
            <person name="Takahashi M."/>
            <person name="Kanda K."/>
            <person name="Yokoi T."/>
            <person name="Furuya T."/>
            <person name="Kikkawa E."/>
            <person name="Omura Y."/>
            <person name="Abe K."/>
            <person name="Kamihara K."/>
            <person name="Katsuta N."/>
            <person name="Sato K."/>
            <person name="Tanikawa M."/>
            <person name="Yamazaki M."/>
            <person name="Ninomiya K."/>
            <person name="Ishibashi T."/>
            <person name="Yamashita H."/>
            <person name="Murakawa K."/>
            <person name="Fujimori K."/>
            <person name="Tanai H."/>
            <person name="Kimata M."/>
            <person name="Watanabe M."/>
            <person name="Hiraoka S."/>
            <person name="Chiba Y."/>
            <person name="Ishida S."/>
            <person name="Ono Y."/>
            <person name="Takiguchi S."/>
            <person name="Watanabe S."/>
            <person name="Yosida M."/>
            <person name="Hotuta T."/>
            <person name="Kusano J."/>
            <person name="Kanehori K."/>
            <person name="Takahashi-Fujii A."/>
            <person name="Hara H."/>
            <person name="Tanase T.-O."/>
            <person name="Nomura Y."/>
            <person name="Togiya S."/>
            <person name="Komai F."/>
            <person name="Hara R."/>
            <person name="Takeuchi K."/>
            <person name="Arita M."/>
            <person name="Imose N."/>
            <person name="Musashino K."/>
            <person name="Yuuki H."/>
            <person name="Oshima A."/>
            <person name="Sasaki N."/>
            <person name="Aotsuka S."/>
            <person name="Yoshikawa Y."/>
            <person name="Matsunawa H."/>
            <person name="Ichihara T."/>
            <person name="Shiohata N."/>
            <person name="Sano S."/>
            <person name="Moriya S."/>
            <person name="Momiyama H."/>
            <person name="Satoh N."/>
            <person name="Takami S."/>
            <person name="Terashima Y."/>
            <person name="Suzuki O."/>
            <person name="Nakagawa S."/>
            <person name="Senoh A."/>
            <person name="Mizoguchi H."/>
            <person name="Goto Y."/>
            <person name="Shimizu F."/>
            <person name="Wakebe H."/>
            <person name="Hishigaki H."/>
            <person name="Watanabe T."/>
            <person name="Sugiyama A."/>
            <person name="Takemoto M."/>
            <person name="Kawakami B."/>
            <person name="Yamazaki M."/>
            <person name="Watanabe K."/>
            <person name="Kumagai A."/>
            <person name="Itakura S."/>
            <person name="Fukuzumi Y."/>
            <person name="Fujimori Y."/>
            <person name="Komiyama M."/>
            <person name="Tashiro H."/>
            <person name="Tanigami A."/>
            <person name="Fujiwara T."/>
            <person name="Ono T."/>
            <person name="Yamada K."/>
            <person name="Fujii Y."/>
            <person name="Ozaki K."/>
            <person name="Hirao M."/>
            <person name="Ohmori Y."/>
            <person name="Kawabata A."/>
            <person name="Hikiji T."/>
            <person name="Kobatake N."/>
            <person name="Inagaki H."/>
            <person name="Ikema Y."/>
            <person name="Okamoto S."/>
            <person name="Okitani R."/>
            <person name="Kawakami T."/>
            <person name="Noguchi S."/>
            <person name="Itoh T."/>
            <person name="Shigeta K."/>
            <person name="Senba T."/>
            <person name="Matsumura K."/>
            <person name="Nakajima Y."/>
            <person name="Mizuno T."/>
            <person name="Morinaga M."/>
            <person name="Sasaki M."/>
            <person name="Togashi T."/>
            <person name="Oyama M."/>
            <person name="Hata H."/>
            <person name="Watanabe M."/>
            <person name="Komatsu T."/>
            <person name="Mizushima-Sugano J."/>
            <person name="Satoh T."/>
            <person name="Shirai Y."/>
            <person name="Takahashi Y."/>
            <person name="Nakagawa K."/>
            <person name="Okumura K."/>
            <person name="Nagase T."/>
            <person name="Nomura N."/>
            <person name="Kikuchi H."/>
            <person name="Masuho Y."/>
            <person name="Yamashita R."/>
            <person name="Nakai K."/>
            <person name="Yada T."/>
            <person name="Nakamura Y."/>
            <person name="Ohara O."/>
            <person name="Isogai T."/>
            <person name="Sugano S."/>
        </authorList>
    </citation>
    <scope>NUCLEOTIDE SEQUENCE [LARGE SCALE MRNA] (ISOFORM 3)</scope>
    <source>
        <tissue>Tongue</tissue>
    </source>
</reference>
<reference key="2">
    <citation type="journal article" date="2004" name="Nature">
        <title>The DNA sequence and biology of human chromosome 19.</title>
        <authorList>
            <person name="Grimwood J."/>
            <person name="Gordon L.A."/>
            <person name="Olsen A.S."/>
            <person name="Terry A."/>
            <person name="Schmutz J."/>
            <person name="Lamerdin J.E."/>
            <person name="Hellsten U."/>
            <person name="Goodstein D."/>
            <person name="Couronne O."/>
            <person name="Tran-Gyamfi M."/>
            <person name="Aerts A."/>
            <person name="Altherr M."/>
            <person name="Ashworth L."/>
            <person name="Bajorek E."/>
            <person name="Black S."/>
            <person name="Branscomb E."/>
            <person name="Caenepeel S."/>
            <person name="Carrano A.V."/>
            <person name="Caoile C."/>
            <person name="Chan Y.M."/>
            <person name="Christensen M."/>
            <person name="Cleland C.A."/>
            <person name="Copeland A."/>
            <person name="Dalin E."/>
            <person name="Dehal P."/>
            <person name="Denys M."/>
            <person name="Detter J.C."/>
            <person name="Escobar J."/>
            <person name="Flowers D."/>
            <person name="Fotopulos D."/>
            <person name="Garcia C."/>
            <person name="Georgescu A.M."/>
            <person name="Glavina T."/>
            <person name="Gomez M."/>
            <person name="Gonzales E."/>
            <person name="Groza M."/>
            <person name="Hammon N."/>
            <person name="Hawkins T."/>
            <person name="Haydu L."/>
            <person name="Ho I."/>
            <person name="Huang W."/>
            <person name="Israni S."/>
            <person name="Jett J."/>
            <person name="Kadner K."/>
            <person name="Kimball H."/>
            <person name="Kobayashi A."/>
            <person name="Larionov V."/>
            <person name="Leem S.-H."/>
            <person name="Lopez F."/>
            <person name="Lou Y."/>
            <person name="Lowry S."/>
            <person name="Malfatti S."/>
            <person name="Martinez D."/>
            <person name="McCready P.M."/>
            <person name="Medina C."/>
            <person name="Morgan J."/>
            <person name="Nelson K."/>
            <person name="Nolan M."/>
            <person name="Ovcharenko I."/>
            <person name="Pitluck S."/>
            <person name="Pollard M."/>
            <person name="Popkie A.P."/>
            <person name="Predki P."/>
            <person name="Quan G."/>
            <person name="Ramirez L."/>
            <person name="Rash S."/>
            <person name="Retterer J."/>
            <person name="Rodriguez A."/>
            <person name="Rogers S."/>
            <person name="Salamov A."/>
            <person name="Salazar A."/>
            <person name="She X."/>
            <person name="Smith D."/>
            <person name="Slezak T."/>
            <person name="Solovyev V."/>
            <person name="Thayer N."/>
            <person name="Tice H."/>
            <person name="Tsai M."/>
            <person name="Ustaszewska A."/>
            <person name="Vo N."/>
            <person name="Wagner M."/>
            <person name="Wheeler J."/>
            <person name="Wu K."/>
            <person name="Xie G."/>
            <person name="Yang J."/>
            <person name="Dubchak I."/>
            <person name="Furey T.S."/>
            <person name="DeJong P."/>
            <person name="Dickson M."/>
            <person name="Gordon D."/>
            <person name="Eichler E.E."/>
            <person name="Pennacchio L.A."/>
            <person name="Richardson P."/>
            <person name="Stubbs L."/>
            <person name="Rokhsar D.S."/>
            <person name="Myers R.M."/>
            <person name="Rubin E.M."/>
            <person name="Lucas S.M."/>
        </authorList>
    </citation>
    <scope>NUCLEOTIDE SEQUENCE [LARGE SCALE GENOMIC DNA]</scope>
</reference>
<reference key="3">
    <citation type="journal article" date="2004" name="Genome Res.">
        <title>The status, quality, and expansion of the NIH full-length cDNA project: the Mammalian Gene Collection (MGC).</title>
        <authorList>
            <consortium name="The MGC Project Team"/>
        </authorList>
    </citation>
    <scope>NUCLEOTIDE SEQUENCE [LARGE SCALE MRNA] (ISOFORM 4)</scope>
</reference>